<evidence type="ECO:0000255" key="1">
    <source>
        <dbReference type="HAMAP-Rule" id="MF_00494"/>
    </source>
</evidence>
<gene>
    <name evidence="1" type="primary">tal</name>
    <name type="ordered locus">BT_1658</name>
</gene>
<organism>
    <name type="scientific">Bacteroides thetaiotaomicron (strain ATCC 29148 / DSM 2079 / JCM 5827 / CCUG 10774 / NCTC 10582 / VPI-5482 / E50)</name>
    <dbReference type="NCBI Taxonomy" id="226186"/>
    <lineage>
        <taxon>Bacteria</taxon>
        <taxon>Pseudomonadati</taxon>
        <taxon>Bacteroidota</taxon>
        <taxon>Bacteroidia</taxon>
        <taxon>Bacteroidales</taxon>
        <taxon>Bacteroidaceae</taxon>
        <taxon>Bacteroides</taxon>
    </lineage>
</organism>
<sequence>MKFFIDTANLEQIQEAYDLGVLDGVTTNPSLMAKEGIKGTENQREHYIKICKIVNADVSAEVIATDYEGMIREGEELAALNPHIVVKVPCIADGIKAIKYFTEKGIRTNCTLVFSVGQALLAAKAGATYVSPFVGRLDDICEDGVGLVGDIVRMYRTYDYKTQVLAASIRNTKHIIECVEVGADVATCPLSAIKGLLNHPLTDSGLKKFLEDYKKVNG</sequence>
<keyword id="KW-0963">Cytoplasm</keyword>
<keyword id="KW-0570">Pentose shunt</keyword>
<keyword id="KW-1185">Reference proteome</keyword>
<keyword id="KW-0704">Schiff base</keyword>
<keyword id="KW-0808">Transferase</keyword>
<reference key="1">
    <citation type="journal article" date="2003" name="Science">
        <title>A genomic view of the human-Bacteroides thetaiotaomicron symbiosis.</title>
        <authorList>
            <person name="Xu J."/>
            <person name="Bjursell M.K."/>
            <person name="Himrod J."/>
            <person name="Deng S."/>
            <person name="Carmichael L.K."/>
            <person name="Chiang H.C."/>
            <person name="Hooper L.V."/>
            <person name="Gordon J.I."/>
        </authorList>
    </citation>
    <scope>NUCLEOTIDE SEQUENCE [LARGE SCALE GENOMIC DNA]</scope>
    <source>
        <strain>ATCC 29148 / DSM 2079 / JCM 5827 / CCUG 10774 / NCTC 10582 / VPI-5482 / E50</strain>
    </source>
</reference>
<name>TAL_BACTN</name>
<dbReference type="EC" id="2.2.1.2" evidence="1"/>
<dbReference type="EMBL" id="AE015928">
    <property type="protein sequence ID" value="AAO76765.1"/>
    <property type="molecule type" value="Genomic_DNA"/>
</dbReference>
<dbReference type="RefSeq" id="NP_810571.1">
    <property type="nucleotide sequence ID" value="NC_004663.1"/>
</dbReference>
<dbReference type="RefSeq" id="WP_011107927.1">
    <property type="nucleotide sequence ID" value="NC_004663.1"/>
</dbReference>
<dbReference type="SMR" id="Q8A767"/>
<dbReference type="FunCoup" id="Q8A767">
    <property type="interactions" value="222"/>
</dbReference>
<dbReference type="STRING" id="226186.BT_1658"/>
<dbReference type="PaxDb" id="226186-BT_1658"/>
<dbReference type="EnsemblBacteria" id="AAO76765">
    <property type="protein sequence ID" value="AAO76765"/>
    <property type="gene ID" value="BT_1658"/>
</dbReference>
<dbReference type="GeneID" id="60927644"/>
<dbReference type="KEGG" id="bth:BT_1658"/>
<dbReference type="PATRIC" id="fig|226186.12.peg.1699"/>
<dbReference type="eggNOG" id="COG0176">
    <property type="taxonomic scope" value="Bacteria"/>
</dbReference>
<dbReference type="HOGENOM" id="CLU_079764_0_0_10"/>
<dbReference type="InParanoid" id="Q8A767"/>
<dbReference type="OrthoDB" id="9807051at2"/>
<dbReference type="UniPathway" id="UPA00115">
    <property type="reaction ID" value="UER00414"/>
</dbReference>
<dbReference type="Proteomes" id="UP000001414">
    <property type="component" value="Chromosome"/>
</dbReference>
<dbReference type="GO" id="GO:0005737">
    <property type="term" value="C:cytoplasm"/>
    <property type="evidence" value="ECO:0007669"/>
    <property type="project" value="UniProtKB-SubCell"/>
</dbReference>
<dbReference type="GO" id="GO:0016832">
    <property type="term" value="F:aldehyde-lyase activity"/>
    <property type="evidence" value="ECO:0007669"/>
    <property type="project" value="InterPro"/>
</dbReference>
<dbReference type="GO" id="GO:0004801">
    <property type="term" value="F:transaldolase activity"/>
    <property type="evidence" value="ECO:0007669"/>
    <property type="project" value="UniProtKB-UniRule"/>
</dbReference>
<dbReference type="GO" id="GO:0005975">
    <property type="term" value="P:carbohydrate metabolic process"/>
    <property type="evidence" value="ECO:0007669"/>
    <property type="project" value="InterPro"/>
</dbReference>
<dbReference type="GO" id="GO:0006098">
    <property type="term" value="P:pentose-phosphate shunt"/>
    <property type="evidence" value="ECO:0007669"/>
    <property type="project" value="UniProtKB-UniRule"/>
</dbReference>
<dbReference type="CDD" id="cd00956">
    <property type="entry name" value="Transaldolase_FSA"/>
    <property type="match status" value="1"/>
</dbReference>
<dbReference type="FunFam" id="3.20.20.70:FF:000018">
    <property type="entry name" value="Probable transaldolase"/>
    <property type="match status" value="1"/>
</dbReference>
<dbReference type="Gene3D" id="3.20.20.70">
    <property type="entry name" value="Aldolase class I"/>
    <property type="match status" value="1"/>
</dbReference>
<dbReference type="HAMAP" id="MF_00494">
    <property type="entry name" value="Transaldolase_3b"/>
    <property type="match status" value="1"/>
</dbReference>
<dbReference type="InterPro" id="IPR013785">
    <property type="entry name" value="Aldolase_TIM"/>
</dbReference>
<dbReference type="InterPro" id="IPR001585">
    <property type="entry name" value="TAL/FSA"/>
</dbReference>
<dbReference type="InterPro" id="IPR022999">
    <property type="entry name" value="Transaldolase_3B"/>
</dbReference>
<dbReference type="InterPro" id="IPR004731">
    <property type="entry name" value="Transaldolase_3B/F6P_aldolase"/>
</dbReference>
<dbReference type="InterPro" id="IPR018225">
    <property type="entry name" value="Transaldolase_AS"/>
</dbReference>
<dbReference type="InterPro" id="IPR033919">
    <property type="entry name" value="TSA/FSA_arc/bac"/>
</dbReference>
<dbReference type="NCBIfam" id="TIGR00875">
    <property type="entry name" value="fsa_talC_mipB"/>
    <property type="match status" value="1"/>
</dbReference>
<dbReference type="PANTHER" id="PTHR10683:SF40">
    <property type="entry name" value="FRUCTOSE-6-PHOSPHATE ALDOLASE 1-RELATED"/>
    <property type="match status" value="1"/>
</dbReference>
<dbReference type="PANTHER" id="PTHR10683">
    <property type="entry name" value="TRANSALDOLASE"/>
    <property type="match status" value="1"/>
</dbReference>
<dbReference type="Pfam" id="PF00923">
    <property type="entry name" value="TAL_FSA"/>
    <property type="match status" value="1"/>
</dbReference>
<dbReference type="SUPFAM" id="SSF51569">
    <property type="entry name" value="Aldolase"/>
    <property type="match status" value="1"/>
</dbReference>
<dbReference type="PROSITE" id="PS01054">
    <property type="entry name" value="TRANSALDOLASE_1"/>
    <property type="match status" value="1"/>
</dbReference>
<protein>
    <recommendedName>
        <fullName evidence="1">Probable transaldolase</fullName>
        <ecNumber evidence="1">2.2.1.2</ecNumber>
    </recommendedName>
</protein>
<comment type="function">
    <text evidence="1">Transaldolase is important for the balance of metabolites in the pentose-phosphate pathway.</text>
</comment>
<comment type="catalytic activity">
    <reaction evidence="1">
        <text>D-sedoheptulose 7-phosphate + D-glyceraldehyde 3-phosphate = D-erythrose 4-phosphate + beta-D-fructose 6-phosphate</text>
        <dbReference type="Rhea" id="RHEA:17053"/>
        <dbReference type="ChEBI" id="CHEBI:16897"/>
        <dbReference type="ChEBI" id="CHEBI:57483"/>
        <dbReference type="ChEBI" id="CHEBI:57634"/>
        <dbReference type="ChEBI" id="CHEBI:59776"/>
        <dbReference type="EC" id="2.2.1.2"/>
    </reaction>
</comment>
<comment type="pathway">
    <text evidence="1">Carbohydrate degradation; pentose phosphate pathway; D-glyceraldehyde 3-phosphate and beta-D-fructose 6-phosphate from D-ribose 5-phosphate and D-xylulose 5-phosphate (non-oxidative stage): step 2/3.</text>
</comment>
<comment type="subcellular location">
    <subcellularLocation>
        <location evidence="1">Cytoplasm</location>
    </subcellularLocation>
</comment>
<comment type="similarity">
    <text evidence="1">Belongs to the transaldolase family. Type 3B subfamily.</text>
</comment>
<proteinExistence type="inferred from homology"/>
<accession>Q8A767</accession>
<feature type="chain" id="PRO_0000173659" description="Probable transaldolase">
    <location>
        <begin position="1"/>
        <end position="218"/>
    </location>
</feature>
<feature type="active site" description="Schiff-base intermediate with substrate" evidence="1">
    <location>
        <position position="87"/>
    </location>
</feature>